<protein>
    <recommendedName>
        <fullName>RuvB-like protein 2</fullName>
        <shortName>RUVBL2</shortName>
        <ecNumber>3.6.4.12</ecNumber>
    </recommendedName>
    <alternativeName>
        <fullName>TIP49-homology protein 2</fullName>
    </alternativeName>
    <alternativeName>
        <fullName>TIP49b homolog</fullName>
    </alternativeName>
</protein>
<feature type="chain" id="PRO_0000165675" description="RuvB-like protein 2">
    <location>
        <begin position="1"/>
        <end position="471"/>
    </location>
</feature>
<feature type="binding site" evidence="1">
    <location>
        <begin position="75"/>
        <end position="82"/>
    </location>
    <ligand>
        <name>ATP</name>
        <dbReference type="ChEBI" id="CHEBI:30616"/>
    </ligand>
</feature>
<feature type="mutagenesis site" description="Lethal." evidence="5">
    <original>G</original>
    <variation>A</variation>
    <location>
        <position position="75"/>
    </location>
</feature>
<feature type="mutagenesis site" description="Growth defect at 37 degrees Celsius." evidence="5">
    <original>G</original>
    <variation>A</variation>
    <location>
        <position position="80"/>
    </location>
</feature>
<feature type="mutagenesis site" description="Defect in snoRNA accumulation. Growth defect at 37 degrees Celsius." evidence="2 4 5">
    <original>K</original>
    <variation>A</variation>
    <location>
        <position position="81"/>
    </location>
</feature>
<feature type="mutagenesis site" description="Lethal." evidence="2 4 5">
    <original>K</original>
    <variation>E</variation>
    <location>
        <position position="81"/>
    </location>
</feature>
<feature type="mutagenesis site" description="Growth defect at 37 degrees Celsius." evidence="2 4 5">
    <original>K</original>
    <variation>R</variation>
    <location>
        <position position="81"/>
    </location>
</feature>
<feature type="mutagenesis site" description="Lethal." evidence="5">
    <original>D</original>
    <variation>N</variation>
    <location>
        <position position="296"/>
    </location>
</feature>
<feature type="mutagenesis site" description="Lethal." evidence="4">
    <original>E</original>
    <variation>G</variation>
    <location>
        <position position="297"/>
    </location>
</feature>
<feature type="strand" evidence="14">
    <location>
        <begin position="135"/>
        <end position="145"/>
    </location>
</feature>
<feature type="strand" evidence="14">
    <location>
        <begin position="147"/>
        <end position="149"/>
    </location>
</feature>
<feature type="strand" evidence="14">
    <location>
        <begin position="156"/>
        <end position="161"/>
    </location>
</feature>
<feature type="strand" evidence="14">
    <location>
        <begin position="166"/>
        <end position="171"/>
    </location>
</feature>
<feature type="helix" evidence="14">
    <location>
        <begin position="173"/>
        <end position="182"/>
    </location>
</feature>
<feature type="strand" evidence="14">
    <location>
        <begin position="189"/>
        <end position="193"/>
    </location>
</feature>
<feature type="turn" evidence="14">
    <location>
        <begin position="194"/>
        <end position="196"/>
    </location>
</feature>
<feature type="strand" evidence="14">
    <location>
        <begin position="199"/>
        <end position="201"/>
    </location>
</feature>
<feature type="strand" evidence="14">
    <location>
        <begin position="203"/>
        <end position="205"/>
    </location>
</feature>
<dbReference type="EC" id="3.6.4.12"/>
<dbReference type="EMBL" id="Z67751">
    <property type="protein sequence ID" value="CAA91609.1"/>
    <property type="molecule type" value="Genomic_DNA"/>
</dbReference>
<dbReference type="EMBL" id="X94561">
    <property type="protein sequence ID" value="CAA64252.1"/>
    <property type="molecule type" value="Genomic_DNA"/>
</dbReference>
<dbReference type="EMBL" id="Z73591">
    <property type="protein sequence ID" value="CAA97952.1"/>
    <property type="molecule type" value="Genomic_DNA"/>
</dbReference>
<dbReference type="EMBL" id="BK006949">
    <property type="protein sequence ID" value="DAA11201.1"/>
    <property type="molecule type" value="Genomic_DNA"/>
</dbReference>
<dbReference type="PIR" id="S61029">
    <property type="entry name" value="S61029"/>
</dbReference>
<dbReference type="RefSeq" id="NP_015089.1">
    <property type="nucleotide sequence ID" value="NM_001184049.1"/>
</dbReference>
<dbReference type="PDB" id="5OUN">
    <property type="method" value="NMR"/>
    <property type="chains" value="A=132-234"/>
</dbReference>
<dbReference type="PDB" id="6GEJ">
    <property type="method" value="EM"/>
    <property type="resolution" value="3.60 A"/>
    <property type="chains" value="U/W/Y=1-471"/>
</dbReference>
<dbReference type="PDB" id="6GEN">
    <property type="method" value="EM"/>
    <property type="resolution" value="3.60 A"/>
    <property type="chains" value="U/W/Y=1-471"/>
</dbReference>
<dbReference type="PDB" id="8ETS">
    <property type="method" value="EM"/>
    <property type="resolution" value="3.04 A"/>
    <property type="chains" value="U/W/Y=15-471"/>
</dbReference>
<dbReference type="PDB" id="8ETU">
    <property type="method" value="EM"/>
    <property type="resolution" value="2.80 A"/>
    <property type="chains" value="U/W/Y=15-471"/>
</dbReference>
<dbReference type="PDB" id="8ETW">
    <property type="method" value="EM"/>
    <property type="resolution" value="2.64 A"/>
    <property type="chains" value="U/W/Y=15-471"/>
</dbReference>
<dbReference type="PDB" id="8EU9">
    <property type="method" value="EM"/>
    <property type="resolution" value="3.48 A"/>
    <property type="chains" value="U/W/Y=15-460"/>
</dbReference>
<dbReference type="PDB" id="8EUF">
    <property type="method" value="EM"/>
    <property type="resolution" value="3.41 A"/>
    <property type="chains" value="U/W/Y=1-460"/>
</dbReference>
<dbReference type="PDB" id="8QKU">
    <property type="method" value="EM"/>
    <property type="resolution" value="3.80 A"/>
    <property type="chains" value="U/W/Y=1-471"/>
</dbReference>
<dbReference type="PDB" id="8QKV">
    <property type="method" value="EM"/>
    <property type="resolution" value="4.70 A"/>
    <property type="chains" value="U/W/Y=1-471"/>
</dbReference>
<dbReference type="PDB" id="8QYV">
    <property type="method" value="EM"/>
    <property type="resolution" value="3.50 A"/>
    <property type="chains" value="U/W/Y=1-471"/>
</dbReference>
<dbReference type="PDB" id="8QZ0">
    <property type="method" value="EM"/>
    <property type="resolution" value="3.80 A"/>
    <property type="chains" value="U/W/Y=1-471"/>
</dbReference>
<dbReference type="PDB" id="9B1D">
    <property type="method" value="EM"/>
    <property type="resolution" value="3.30 A"/>
    <property type="chains" value="F/H/J=1-471"/>
</dbReference>
<dbReference type="PDB" id="9B1E">
    <property type="method" value="EM"/>
    <property type="resolution" value="4.40 A"/>
    <property type="chains" value="F/H/J=1-471"/>
</dbReference>
<dbReference type="PDB" id="9FBW">
    <property type="method" value="EM"/>
    <property type="resolution" value="4.40 A"/>
    <property type="chains" value="U/W/Y=1-471"/>
</dbReference>
<dbReference type="PDBsum" id="5OUN"/>
<dbReference type="PDBsum" id="6GEJ"/>
<dbReference type="PDBsum" id="6GEN"/>
<dbReference type="PDBsum" id="8ETS"/>
<dbReference type="PDBsum" id="8ETU"/>
<dbReference type="PDBsum" id="8ETW"/>
<dbReference type="PDBsum" id="8EU9"/>
<dbReference type="PDBsum" id="8EUF"/>
<dbReference type="PDBsum" id="8QKU"/>
<dbReference type="PDBsum" id="8QKV"/>
<dbReference type="PDBsum" id="8QYV"/>
<dbReference type="PDBsum" id="8QZ0"/>
<dbReference type="PDBsum" id="9B1D"/>
<dbReference type="PDBsum" id="9B1E"/>
<dbReference type="PDBsum" id="9FBW"/>
<dbReference type="EMDB" id="EMD-18471"/>
<dbReference type="EMDB" id="EMD-18472"/>
<dbReference type="EMDB" id="EMD-18764"/>
<dbReference type="EMDB" id="EMD-18769"/>
<dbReference type="EMDB" id="EMD-28597"/>
<dbReference type="EMDB" id="EMD-28599"/>
<dbReference type="EMDB" id="EMD-28601"/>
<dbReference type="EMDB" id="EMD-28609"/>
<dbReference type="EMDB" id="EMD-28613"/>
<dbReference type="EMDB" id="EMD-3080"/>
<dbReference type="EMDB" id="EMD-3081"/>
<dbReference type="EMDB" id="EMD-3082"/>
<dbReference type="EMDB" id="EMD-3083"/>
<dbReference type="EMDB" id="EMD-3084"/>
<dbReference type="EMDB" id="EMD-3085"/>
<dbReference type="EMDB" id="EMD-4395"/>
<dbReference type="EMDB" id="EMD-4396"/>
<dbReference type="EMDB" id="EMD-44074"/>
<dbReference type="EMDB" id="EMD-44075"/>
<dbReference type="EMDB" id="EMD-50297"/>
<dbReference type="EMDB" id="EMD-6215"/>
<dbReference type="EMDB" id="EMD-6216"/>
<dbReference type="EMDB" id="EMD-6217"/>
<dbReference type="EMDB" id="EMD-6218"/>
<dbReference type="SMR" id="Q12464"/>
<dbReference type="BioGRID" id="35927">
    <property type="interactions" value="538"/>
</dbReference>
<dbReference type="ComplexPortal" id="CPX-1814">
    <property type="entry name" value="R2TP co-chaperone complex"/>
</dbReference>
<dbReference type="ComplexPortal" id="CPX-2122">
    <property type="entry name" value="Swr1 chromatin remodelling complex"/>
</dbReference>
<dbReference type="ComplexPortal" id="CPX-863">
    <property type="entry name" value="INO80 chromatin remodeling complex"/>
</dbReference>
<dbReference type="DIP" id="DIP-5207N"/>
<dbReference type="FunCoup" id="Q12464">
    <property type="interactions" value="1977"/>
</dbReference>
<dbReference type="IntAct" id="Q12464">
    <property type="interactions" value="215"/>
</dbReference>
<dbReference type="MINT" id="Q12464"/>
<dbReference type="STRING" id="4932.YPL235W"/>
<dbReference type="iPTMnet" id="Q12464"/>
<dbReference type="PaxDb" id="4932-YPL235W"/>
<dbReference type="PeptideAtlas" id="Q12464"/>
<dbReference type="EnsemblFungi" id="YPL235W_mRNA">
    <property type="protein sequence ID" value="YPL235W"/>
    <property type="gene ID" value="YPL235W"/>
</dbReference>
<dbReference type="GeneID" id="855841"/>
<dbReference type="KEGG" id="sce:YPL235W"/>
<dbReference type="AGR" id="SGD:S000006156"/>
<dbReference type="SGD" id="S000006156">
    <property type="gene designation" value="RVB2"/>
</dbReference>
<dbReference type="VEuPathDB" id="FungiDB:YPL235W"/>
<dbReference type="eggNOG" id="KOG2680">
    <property type="taxonomic scope" value="Eukaryota"/>
</dbReference>
<dbReference type="GeneTree" id="ENSGT00940000153556"/>
<dbReference type="HOGENOM" id="CLU_028311_4_0_1"/>
<dbReference type="InParanoid" id="Q12464"/>
<dbReference type="OMA" id="IINTEPY"/>
<dbReference type="OrthoDB" id="10060499at2759"/>
<dbReference type="BioCyc" id="YEAST:G3O-34122-MONOMER"/>
<dbReference type="BioGRID-ORCS" id="855841">
    <property type="hits" value="3 hits in 10 CRISPR screens"/>
</dbReference>
<dbReference type="CD-CODE" id="E03F929F">
    <property type="entry name" value="Stress granule"/>
</dbReference>
<dbReference type="PRO" id="PR:Q12464"/>
<dbReference type="Proteomes" id="UP000002311">
    <property type="component" value="Chromosome XVI"/>
</dbReference>
<dbReference type="RNAct" id="Q12464">
    <property type="molecule type" value="protein"/>
</dbReference>
<dbReference type="GO" id="GO:0000785">
    <property type="term" value="C:chromatin"/>
    <property type="evidence" value="ECO:0000314"/>
    <property type="project" value="ComplexPortal"/>
</dbReference>
<dbReference type="GO" id="GO:0031011">
    <property type="term" value="C:Ino80 complex"/>
    <property type="evidence" value="ECO:0000353"/>
    <property type="project" value="SGD"/>
</dbReference>
<dbReference type="GO" id="GO:0035267">
    <property type="term" value="C:NuA4 histone acetyltransferase complex"/>
    <property type="evidence" value="ECO:0000318"/>
    <property type="project" value="GO_Central"/>
</dbReference>
<dbReference type="GO" id="GO:0005634">
    <property type="term" value="C:nucleus"/>
    <property type="evidence" value="ECO:0000314"/>
    <property type="project" value="SGD"/>
</dbReference>
<dbReference type="GO" id="GO:0097255">
    <property type="term" value="C:R2TP complex"/>
    <property type="evidence" value="ECO:0000314"/>
    <property type="project" value="SGD"/>
</dbReference>
<dbReference type="GO" id="GO:0000812">
    <property type="term" value="C:Swr1 complex"/>
    <property type="evidence" value="ECO:0000314"/>
    <property type="project" value="SGD"/>
</dbReference>
<dbReference type="GO" id="GO:0110078">
    <property type="term" value="C:TTT Hsp90 cochaperone complex"/>
    <property type="evidence" value="ECO:0007005"/>
    <property type="project" value="SGD"/>
</dbReference>
<dbReference type="GO" id="GO:0043138">
    <property type="term" value="F:3'-5' DNA helicase activity"/>
    <property type="evidence" value="ECO:0000314"/>
    <property type="project" value="SGD"/>
</dbReference>
<dbReference type="GO" id="GO:0043139">
    <property type="term" value="F:5'-3' DNA helicase activity"/>
    <property type="evidence" value="ECO:0000314"/>
    <property type="project" value="SGD"/>
</dbReference>
<dbReference type="GO" id="GO:0005524">
    <property type="term" value="F:ATP binding"/>
    <property type="evidence" value="ECO:0007669"/>
    <property type="project" value="UniProtKB-KW"/>
</dbReference>
<dbReference type="GO" id="GO:0016887">
    <property type="term" value="F:ATP hydrolysis activity"/>
    <property type="evidence" value="ECO:0007669"/>
    <property type="project" value="InterPro"/>
</dbReference>
<dbReference type="GO" id="GO:0003678">
    <property type="term" value="F:DNA helicase activity"/>
    <property type="evidence" value="ECO:0000318"/>
    <property type="project" value="GO_Central"/>
</dbReference>
<dbReference type="GO" id="GO:0000492">
    <property type="term" value="P:box C/D snoRNP assembly"/>
    <property type="evidence" value="ECO:0000315"/>
    <property type="project" value="SGD"/>
</dbReference>
<dbReference type="GO" id="GO:0006338">
    <property type="term" value="P:chromatin remodeling"/>
    <property type="evidence" value="ECO:0000314"/>
    <property type="project" value="ComplexPortal"/>
</dbReference>
<dbReference type="GO" id="GO:0006281">
    <property type="term" value="P:DNA repair"/>
    <property type="evidence" value="ECO:0000303"/>
    <property type="project" value="ComplexPortal"/>
</dbReference>
<dbReference type="GO" id="GO:0050821">
    <property type="term" value="P:protein stabilization"/>
    <property type="evidence" value="ECO:0000303"/>
    <property type="project" value="ComplexPortal"/>
</dbReference>
<dbReference type="GO" id="GO:0006355">
    <property type="term" value="P:regulation of DNA-templated transcription"/>
    <property type="evidence" value="ECO:0000303"/>
    <property type="project" value="ComplexPortal"/>
</dbReference>
<dbReference type="GO" id="GO:0006357">
    <property type="term" value="P:regulation of transcription by RNA polymerase II"/>
    <property type="evidence" value="ECO:0000315"/>
    <property type="project" value="SGD"/>
</dbReference>
<dbReference type="GO" id="GO:0006364">
    <property type="term" value="P:rRNA processing"/>
    <property type="evidence" value="ECO:0000315"/>
    <property type="project" value="SGD"/>
</dbReference>
<dbReference type="FunFam" id="3.40.50.300:FF:002221">
    <property type="entry name" value="RuvB-like 2"/>
    <property type="match status" value="2"/>
</dbReference>
<dbReference type="FunFam" id="1.10.8.60:FF:000010">
    <property type="entry name" value="RuvB-like helicase"/>
    <property type="match status" value="1"/>
</dbReference>
<dbReference type="FunFam" id="2.40.50.360:FF:000002">
    <property type="entry name" value="RuvB-like helicase"/>
    <property type="match status" value="1"/>
</dbReference>
<dbReference type="Gene3D" id="1.10.8.60">
    <property type="match status" value="1"/>
</dbReference>
<dbReference type="Gene3D" id="3.40.50.300">
    <property type="entry name" value="P-loop containing nucleotide triphosphate hydrolases"/>
    <property type="match status" value="1"/>
</dbReference>
<dbReference type="Gene3D" id="2.40.50.360">
    <property type="entry name" value="RuvB-like helicase, domain II"/>
    <property type="match status" value="1"/>
</dbReference>
<dbReference type="InterPro" id="IPR003593">
    <property type="entry name" value="AAA+_ATPase"/>
</dbReference>
<dbReference type="InterPro" id="IPR027417">
    <property type="entry name" value="P-loop_NTPase"/>
</dbReference>
<dbReference type="InterPro" id="IPR027238">
    <property type="entry name" value="RuvB-like"/>
</dbReference>
<dbReference type="InterPro" id="IPR041048">
    <property type="entry name" value="RuvB-like_C"/>
</dbReference>
<dbReference type="InterPro" id="IPR042487">
    <property type="entry name" value="RuvBL1/2_DNA/RNA_bd_dom"/>
</dbReference>
<dbReference type="InterPro" id="IPR010339">
    <property type="entry name" value="TIP49_P-loop"/>
</dbReference>
<dbReference type="PANTHER" id="PTHR11093">
    <property type="entry name" value="RUVB-RELATED REPTIN AND PONTIN"/>
    <property type="match status" value="1"/>
</dbReference>
<dbReference type="Pfam" id="PF06068">
    <property type="entry name" value="TIP49"/>
    <property type="match status" value="1"/>
</dbReference>
<dbReference type="Pfam" id="PF17856">
    <property type="entry name" value="TIP49_C"/>
    <property type="match status" value="1"/>
</dbReference>
<dbReference type="SMART" id="SM00382">
    <property type="entry name" value="AAA"/>
    <property type="match status" value="1"/>
</dbReference>
<dbReference type="SUPFAM" id="SSF52540">
    <property type="entry name" value="P-loop containing nucleoside triphosphate hydrolases"/>
    <property type="match status" value="1"/>
</dbReference>
<gene>
    <name type="primary">RVB2</name>
    <name type="synonym">TIH2</name>
    <name type="synonym">TIP49B</name>
    <name type="ordered locus">YPL235W</name>
    <name type="ORF">P1060</name>
</gene>
<comment type="function">
    <text evidence="2 3 4 5 6 8 9 10 11">DNA helicase which participates in several chromatin remodeling complexes, including the SWR1 and the INO80 complexes. The SWR1 complex mediates the ATP-dependent exchange of histone H2A for the H2A variant HZT1 leading to transcriptional regulation of selected genes by chromatin remodeling. The INO80 complex remodels chromatin by shifting nucleosomes. Its ability to induce transcription of some phosphate-responsive genes is modulated by inositol polyphosphates. The INO80 complex is involved in DNA repair by associating to 'Ser-129' phosphorylated H2A histones as a response to DNA damage. During transcription may recruit SPT15/TBP to the TATA-boxes of involved genes. Required for box C/D and box H/ACA snoRNA accumulation and involved in pre-rRNA processing.</text>
</comment>
<comment type="catalytic activity">
    <reaction>
        <text>ATP + H2O = ADP + phosphate + H(+)</text>
        <dbReference type="Rhea" id="RHEA:13065"/>
        <dbReference type="ChEBI" id="CHEBI:15377"/>
        <dbReference type="ChEBI" id="CHEBI:15378"/>
        <dbReference type="ChEBI" id="CHEBI:30616"/>
        <dbReference type="ChEBI" id="CHEBI:43474"/>
        <dbReference type="ChEBI" id="CHEBI:456216"/>
        <dbReference type="EC" id="3.6.4.12"/>
    </reaction>
</comment>
<comment type="subunit">
    <text evidence="2 3 4 6 8 9 10 11 12">Probably forms a homohexamer. Interacts with RVB1 and may form heterododecamers with RVB1. Component of the SWR1 chromatin remodeling complex composed of at least ACT1, ARP4, RVB1, RVB2, ARP6, YAF9, VPS71, VPS72, SWC3, SWC4, SWC5, SWC7 and SWR1, and perhaps BDF1. Component of the chromatin-remodeling INO80 complex, at least composed of ARP4, ARP5, ARP8, RVB1, RVB2, TAF14, NHP10, IES1, IES3, IES4, IES6, ACT1, IES2, IES5 and INO80. Also belongs to the R2TP complex composed of at least RVB1, RVB2, TAH1 and PIH1. Interacts with SPT15/TBP.</text>
</comment>
<comment type="interaction">
    <interactant intactId="EBI-31814">
        <id>Q12464</id>
    </interactant>
    <interactant intactId="EBI-24499">
        <id>P38768</id>
        <label>PIH1</label>
    </interactant>
    <organismsDiffer>false</organismsDiffer>
    <experiments>8</experiments>
</comment>
<comment type="interaction">
    <interactant intactId="EBI-31814">
        <id>Q12464</id>
    </interactant>
    <interactant intactId="EBI-30712">
        <id>Q03940</id>
        <label>RVB1</label>
    </interactant>
    <organismsDiffer>false</organismsDiffer>
    <experiments>22</experiments>
</comment>
<comment type="interaction">
    <interactant intactId="EBI-31814">
        <id>Q12464</id>
    </interactant>
    <interactant intactId="EBI-19129">
        <id>P13393</id>
        <label>SPT15</label>
    </interactant>
    <organismsDiffer>false</organismsDiffer>
    <experiments>3</experiments>
</comment>
<comment type="interaction">
    <interactant intactId="EBI-31814">
        <id>Q12464</id>
    </interactant>
    <interactant intactId="EBI-23061">
        <id>P53201</id>
        <label>SWC4</label>
    </interactant>
    <organismsDiffer>false</organismsDiffer>
    <experiments>5</experiments>
</comment>
<comment type="subcellular location">
    <subcellularLocation>
        <location evidence="2 5">Nucleus</location>
        <location evidence="2 5">Nucleoplasm</location>
    </subcellularLocation>
</comment>
<comment type="miscellaneous">
    <text evidence="7">Present with 3030 molecules/cell in log phase SD medium.</text>
</comment>
<comment type="similarity">
    <text evidence="13">Belongs to the RuvB family.</text>
</comment>
<accession>Q12464</accession>
<accession>D6W3D5</accession>
<proteinExistence type="evidence at protein level"/>
<keyword id="KW-0002">3D-structure</keyword>
<keyword id="KW-0010">Activator</keyword>
<keyword id="KW-0067">ATP-binding</keyword>
<keyword id="KW-0156">Chromatin regulator</keyword>
<keyword id="KW-0227">DNA damage</keyword>
<keyword id="KW-0234">DNA repair</keyword>
<keyword id="KW-0347">Helicase</keyword>
<keyword id="KW-0378">Hydrolase</keyword>
<keyword id="KW-0547">Nucleotide-binding</keyword>
<keyword id="KW-0539">Nucleus</keyword>
<keyword id="KW-1185">Reference proteome</keyword>
<keyword id="KW-0698">rRNA processing</keyword>
<keyword id="KW-0804">Transcription</keyword>
<keyword id="KW-0805">Transcription regulation</keyword>
<organism>
    <name type="scientific">Saccharomyces cerevisiae (strain ATCC 204508 / S288c)</name>
    <name type="common">Baker's yeast</name>
    <dbReference type="NCBI Taxonomy" id="559292"/>
    <lineage>
        <taxon>Eukaryota</taxon>
        <taxon>Fungi</taxon>
        <taxon>Dikarya</taxon>
        <taxon>Ascomycota</taxon>
        <taxon>Saccharomycotina</taxon>
        <taxon>Saccharomycetes</taxon>
        <taxon>Saccharomycetales</taxon>
        <taxon>Saccharomycetaceae</taxon>
        <taxon>Saccharomyces</taxon>
    </lineage>
</organism>
<evidence type="ECO:0000250" key="1"/>
<evidence type="ECO:0000269" key="2">
    <source>
    </source>
</evidence>
<evidence type="ECO:0000269" key="3">
    <source>
    </source>
</evidence>
<evidence type="ECO:0000269" key="4">
    <source>
    </source>
</evidence>
<evidence type="ECO:0000269" key="5">
    <source>
    </source>
</evidence>
<evidence type="ECO:0000269" key="6">
    <source>
    </source>
</evidence>
<evidence type="ECO:0000269" key="7">
    <source>
    </source>
</evidence>
<evidence type="ECO:0000269" key="8">
    <source>
    </source>
</evidence>
<evidence type="ECO:0000269" key="9">
    <source>
    </source>
</evidence>
<evidence type="ECO:0000269" key="10">
    <source>
    </source>
</evidence>
<evidence type="ECO:0000269" key="11">
    <source>
    </source>
</evidence>
<evidence type="ECO:0000269" key="12">
    <source>
    </source>
</evidence>
<evidence type="ECO:0000305" key="13"/>
<evidence type="ECO:0007829" key="14">
    <source>
        <dbReference type="PDB" id="5OUN"/>
    </source>
</evidence>
<sequence>MSIQTSDPNETSDLKSLSLIAAHSHITGLGLDENLQPRPTSEGMVGQLQARRAAGVILKMVQNGTIAGRAVLVAGPPSTGKTALAMGVSQSLGKDVPFTAIAGSEIFSLELSKTEALTQAFRKSIGIKIKEETELIEGEVVEIQIDRSITGGHKQGKLTIKTTDMETIYELGNKMIDGLTKEKVLAGDVISIDKASGKITKLGRSFARSRDYDAMGADTRFVQCPEGELQKRKTVVHTVSLHEIDVINSRTQGFLALFTGDTGEIRSEVRDQINTKVAEWKEEGKAEIVPGVLFIDEVHMLDIECFSFINRALEDEFAPIVMMATNRGVSKTRGTNYKSPHGLPLDLLDRSIIITTKSYNEQEIKTILSIRAQEEEVELSSDALDLLTKTGVETSLRYSSNLISVAQQIAMKRKNNTVEVEDVKRAYLLFLDSARSVKYVQENESQYIDDQGNVQISIAKSADPDAMDTTE</sequence>
<name>RUVB2_YEAST</name>
<reference key="1">
    <citation type="journal article" date="1997" name="Nature">
        <title>The nucleotide sequence of Saccharomyces cerevisiae chromosome XVI.</title>
        <authorList>
            <person name="Bussey H."/>
            <person name="Storms R.K."/>
            <person name="Ahmed A."/>
            <person name="Albermann K."/>
            <person name="Allen E."/>
            <person name="Ansorge W."/>
            <person name="Araujo R."/>
            <person name="Aparicio A."/>
            <person name="Barrell B.G."/>
            <person name="Badcock K."/>
            <person name="Benes V."/>
            <person name="Botstein D."/>
            <person name="Bowman S."/>
            <person name="Brueckner M."/>
            <person name="Carpenter J."/>
            <person name="Cherry J.M."/>
            <person name="Chung E."/>
            <person name="Churcher C.M."/>
            <person name="Coster F."/>
            <person name="Davis K."/>
            <person name="Davis R.W."/>
            <person name="Dietrich F.S."/>
            <person name="Delius H."/>
            <person name="DiPaolo T."/>
            <person name="Dubois E."/>
            <person name="Duesterhoeft A."/>
            <person name="Duncan M."/>
            <person name="Floeth M."/>
            <person name="Fortin N."/>
            <person name="Friesen J.D."/>
            <person name="Fritz C."/>
            <person name="Goffeau A."/>
            <person name="Hall J."/>
            <person name="Hebling U."/>
            <person name="Heumann K."/>
            <person name="Hilbert H."/>
            <person name="Hillier L.W."/>
            <person name="Hunicke-Smith S."/>
            <person name="Hyman R.W."/>
            <person name="Johnston M."/>
            <person name="Kalman S."/>
            <person name="Kleine K."/>
            <person name="Komp C."/>
            <person name="Kurdi O."/>
            <person name="Lashkari D."/>
            <person name="Lew H."/>
            <person name="Lin A."/>
            <person name="Lin D."/>
            <person name="Louis E.J."/>
            <person name="Marathe R."/>
            <person name="Messenguy F."/>
            <person name="Mewes H.-W."/>
            <person name="Mirtipati S."/>
            <person name="Moestl D."/>
            <person name="Mueller-Auer S."/>
            <person name="Namath A."/>
            <person name="Nentwich U."/>
            <person name="Oefner P."/>
            <person name="Pearson D."/>
            <person name="Petel F.X."/>
            <person name="Pohl T.M."/>
            <person name="Purnelle B."/>
            <person name="Rajandream M.A."/>
            <person name="Rechmann S."/>
            <person name="Rieger M."/>
            <person name="Riles L."/>
            <person name="Roberts D."/>
            <person name="Schaefer M."/>
            <person name="Scharfe M."/>
            <person name="Scherens B."/>
            <person name="Schramm S."/>
            <person name="Schroeder M."/>
            <person name="Sdicu A.-M."/>
            <person name="Tettelin H."/>
            <person name="Urrestarazu L.A."/>
            <person name="Ushinsky S."/>
            <person name="Vierendeels F."/>
            <person name="Vissers S."/>
            <person name="Voss H."/>
            <person name="Walsh S.V."/>
            <person name="Wambutt R."/>
            <person name="Wang Y."/>
            <person name="Wedler E."/>
            <person name="Wedler H."/>
            <person name="Winnett E."/>
            <person name="Zhong W.-W."/>
            <person name="Zollner A."/>
            <person name="Vo D.H."/>
            <person name="Hani J."/>
        </authorList>
    </citation>
    <scope>NUCLEOTIDE SEQUENCE [LARGE SCALE GENOMIC DNA]</scope>
    <source>
        <strain>ATCC 204508 / S288c</strain>
    </source>
</reference>
<reference key="2">
    <citation type="journal article" date="2014" name="G3 (Bethesda)">
        <title>The reference genome sequence of Saccharomyces cerevisiae: Then and now.</title>
        <authorList>
            <person name="Engel S.R."/>
            <person name="Dietrich F.S."/>
            <person name="Fisk D.G."/>
            <person name="Binkley G."/>
            <person name="Balakrishnan R."/>
            <person name="Costanzo M.C."/>
            <person name="Dwight S.S."/>
            <person name="Hitz B.C."/>
            <person name="Karra K."/>
            <person name="Nash R.S."/>
            <person name="Weng S."/>
            <person name="Wong E.D."/>
            <person name="Lloyd P."/>
            <person name="Skrzypek M.S."/>
            <person name="Miyasato S.R."/>
            <person name="Simison M."/>
            <person name="Cherry J.M."/>
        </authorList>
    </citation>
    <scope>GENOME REANNOTATION</scope>
    <source>
        <strain>ATCC 204508 / S288c</strain>
    </source>
</reference>
<reference key="3">
    <citation type="journal article" date="2000" name="J. Biol. Chem.">
        <title>The Saccharomyces cerevisiae RuvB-like protein, Tih2p, is required for cell cycle progression and RNA polymerase II-directed transcription.</title>
        <authorList>
            <person name="Lim C.R."/>
            <person name="Kimata Y."/>
            <person name="Ohdate H."/>
            <person name="Kokubo T."/>
            <person name="Kikuchi N."/>
            <person name="Horigome T."/>
            <person name="Kohno K."/>
        </authorList>
    </citation>
    <scope>FUNCTION</scope>
    <scope>SUBCELLULAR LOCATION</scope>
    <scope>MUTAGENESIS OF LYS-81</scope>
    <scope>INTERACTION WITH RVB1</scope>
</reference>
<reference key="4">
    <citation type="journal article" date="2000" name="Nature">
        <title>A chromatin remodelling complex involved in transcription and DNA processing.</title>
        <authorList>
            <person name="Shen X."/>
            <person name="Mizuguchi G."/>
            <person name="Hamiche A."/>
            <person name="Wu C."/>
        </authorList>
    </citation>
    <scope>IDENTIFICATION IN THE INO80 COMPLEX</scope>
    <scope>FUNCTION OF THE INO80 COMPLEX</scope>
    <scope>IDENTIFICATION BY MASS SPECTROMETRY</scope>
</reference>
<reference key="5">
    <citation type="journal article" date="2001" name="J. Biol. Chem.">
        <title>Rvb1p and Rvb2p are essential components of a chromatin remodeling complex that regulates transcription of over 5% of yeast genes.</title>
        <authorList>
            <person name="Jonsson Z.O."/>
            <person name="Dhar S.K."/>
            <person name="Narlikar G.J."/>
            <person name="Auty R."/>
            <person name="Wagle N."/>
            <person name="Pellman D."/>
            <person name="Pratt R.E."/>
            <person name="Kingston R."/>
            <person name="Dutta A."/>
        </authorList>
    </citation>
    <scope>FUNCTION</scope>
    <scope>INTERACTION WITH RVB1</scope>
    <scope>IDENTIFICATION IN A COMPLEX WITH RBV1; ACT1 AND ARP4</scope>
    <scope>IDENTIFICATION BY MASS SPECTROMETRY</scope>
    <scope>MUTAGENESIS OF LYS-81 AND GLU-297</scope>
</reference>
<reference key="6">
    <citation type="journal article" date="2001" name="Mol. Cell. Biol.">
        <title>A well-connected and conserved nucleoplasmic helicase is required for production of box C/D and H/ACA snoRNAs and localization of snoRNP proteins.</title>
        <authorList>
            <person name="King T.H."/>
            <person name="Decatur W.A."/>
            <person name="Bertrand E."/>
            <person name="Maxwell E.S."/>
            <person name="Fournier M.J."/>
        </authorList>
    </citation>
    <scope>FUNCTION IN SNORNA SYNTHESIS</scope>
    <scope>SUBCELLULAR LOCATION</scope>
    <scope>MUTAGENESIS OF GLY-75; GLY-80; LYS-81 AND ASP-296</scope>
</reference>
<reference key="7">
    <citation type="journal article" date="2003" name="J. Biol. Chem.">
        <title>Impairment of the DNA binding activity of the TATA-binding protein renders the transcriptional function of Rvb2p/Tih2p, the yeast RuvB-like protein, essential for cell growth.</title>
        <authorList>
            <person name="Ohdate H."/>
            <person name="Lim C.R."/>
            <person name="Kokubo T."/>
            <person name="Matsubara K."/>
            <person name="Kimata Y."/>
            <person name="Kohno K."/>
        </authorList>
    </citation>
    <scope>FUNCTION</scope>
    <scope>INTERACTION WITH SPT15</scope>
</reference>
<reference key="8">
    <citation type="journal article" date="2003" name="Mol. Cell">
        <title>Assigning function to yeast proteins by integration of technologies.</title>
        <authorList>
            <person name="Hazbun T.R."/>
            <person name="Malmstroem L."/>
            <person name="Anderson S."/>
            <person name="Graczyk B.J."/>
            <person name="Fox B."/>
            <person name="Riffle M."/>
            <person name="Sundin B.A."/>
            <person name="Aranda J.D."/>
            <person name="McDonald W.H."/>
            <person name="Chiu C.-H."/>
            <person name="Snydsman B.E."/>
            <person name="Bradley P."/>
            <person name="Muller E.G.D."/>
            <person name="Fields S."/>
            <person name="Baker D."/>
            <person name="Yates J.R. III"/>
            <person name="Davis T.N."/>
        </authorList>
    </citation>
    <scope>IDENTIFICATION BY MASS SPECTROMETRY</scope>
</reference>
<reference key="9">
    <citation type="journal article" date="2003" name="Mol. Cell">
        <title>A Snf2 family ATPase complex required for recruitment of the histone H2A variant Htz1.</title>
        <authorList>
            <person name="Krogan N.J."/>
            <person name="Keogh M.-C."/>
            <person name="Datta N."/>
            <person name="Sawa C."/>
            <person name="Ryan O.W."/>
            <person name="Ding H."/>
            <person name="Haw R.A."/>
            <person name="Pootoolal J."/>
            <person name="Tong A."/>
            <person name="Canadien V."/>
            <person name="Richards D.P."/>
            <person name="Wu X."/>
            <person name="Emili A."/>
            <person name="Hughes T.R."/>
            <person name="Buratowski S."/>
            <person name="Greenblatt J.F."/>
        </authorList>
    </citation>
    <scope>IDENTIFICATION IN THE SWR1 COMPLEX</scope>
    <scope>FUNCTION OF THE SWR1 COMPLEX</scope>
    <scope>IDENTIFICATION BY MASS SPECTROMETRY</scope>
</reference>
<reference key="10">
    <citation type="journal article" date="2003" name="Nature">
        <title>Global analysis of protein expression in yeast.</title>
        <authorList>
            <person name="Ghaemmaghami S."/>
            <person name="Huh W.-K."/>
            <person name="Bower K."/>
            <person name="Howson R.W."/>
            <person name="Belle A."/>
            <person name="Dephoure N."/>
            <person name="O'Shea E.K."/>
            <person name="Weissman J.S."/>
        </authorList>
    </citation>
    <scope>LEVEL OF PROTEIN EXPRESSION [LARGE SCALE ANALYSIS]</scope>
</reference>
<reference key="11">
    <citation type="journal article" date="2004" name="Mol. Cell">
        <title>Rvb1p/Rvb2p recruit Arp5p and assemble a functional Ino80 chromatin remodeling complex.</title>
        <authorList>
            <person name="Jonsson Z.O."/>
            <person name="Jha S."/>
            <person name="Wohlschlegel J.A."/>
            <person name="Dutta A."/>
        </authorList>
    </citation>
    <scope>FUNCTION</scope>
    <scope>IDENTIFICATION IN THE INO80 COMPLEX</scope>
    <scope>IDENTIFICATION BY MASS SPECTROMETRY</scope>
</reference>
<reference key="12">
    <citation type="journal article" date="2004" name="PLoS Biol.">
        <title>A protein complex containing the conserved Swi2/Snf2-related ATPase Swr1p deposits histone variant H2A.Z into euchromatin.</title>
        <authorList>
            <person name="Kobor M.S."/>
            <person name="Venkatasubrahmanyam S."/>
            <person name="Meneghini M.D."/>
            <person name="Gin J.W."/>
            <person name="Jennings J.L."/>
            <person name="Link A.J."/>
            <person name="Madhani H.D."/>
            <person name="Rine J."/>
        </authorList>
    </citation>
    <scope>IDENTIFICATION IN THE SWR1 COMPLEX</scope>
    <scope>FUNCTION OF THE SWR1 COMPLEX</scope>
    <scope>IDENTIFICATION BY MASS SPECTROMETRY</scope>
</reference>
<reference key="13">
    <citation type="journal article" date="2004" name="Science">
        <title>ATP-driven exchange of histone H2AZ variant catalyzed by SWR1 chromatin remodeling complex.</title>
        <authorList>
            <person name="Mizuguchi G."/>
            <person name="Shen X."/>
            <person name="Landry J."/>
            <person name="Wu W.-H."/>
            <person name="Sen S."/>
            <person name="Wu C."/>
        </authorList>
    </citation>
    <scope>IDENTIFICATION IN THE SWR1 COMPLEX</scope>
    <scope>FUNCTION OF THE SWR1 COMPLEX</scope>
    <scope>IDENTIFICATION BY MASS SPECTROMETRY</scope>
</reference>
<reference key="14">
    <citation type="journal article" date="2005" name="Cell">
        <title>Navigating the chaperone network: an integrative map of physical and genetic interactions mediated by the hsp90 chaperone.</title>
        <authorList>
            <person name="Zhao R."/>
            <person name="Davey M.G."/>
            <person name="Hsu Y.-C."/>
            <person name="Kaplanek P."/>
            <person name="Tong A."/>
            <person name="Parsons A.B."/>
            <person name="Krogan N.J."/>
            <person name="Cagney G."/>
            <person name="Mai D."/>
            <person name="Greenblatt J.F."/>
            <person name="Boone C."/>
            <person name="Emili A."/>
            <person name="Houry W.A."/>
        </authorList>
    </citation>
    <scope>IDENTIFICATION IN THE R2PT COMPLEX</scope>
    <scope>IDENTIFICATION BY MASS SPECTROMETRY</scope>
</reference>